<comment type="function">
    <text evidence="1">Catalyzes the conversion of 7,8-dihydroneopterin triphosphate (H2NTP) to 6-carboxy-5,6,7,8-tetrahydropterin (CPH4) and acetaldehyde.</text>
</comment>
<comment type="catalytic activity">
    <reaction>
        <text>7,8-dihydroneopterin 3'-triphosphate + H2O = 6-carboxy-5,6,7,8-tetrahydropterin + triphosphate + acetaldehyde + 2 H(+)</text>
        <dbReference type="Rhea" id="RHEA:27966"/>
        <dbReference type="ChEBI" id="CHEBI:15343"/>
        <dbReference type="ChEBI" id="CHEBI:15377"/>
        <dbReference type="ChEBI" id="CHEBI:15378"/>
        <dbReference type="ChEBI" id="CHEBI:18036"/>
        <dbReference type="ChEBI" id="CHEBI:58462"/>
        <dbReference type="ChEBI" id="CHEBI:61032"/>
        <dbReference type="EC" id="4.1.2.50"/>
    </reaction>
</comment>
<comment type="cofactor">
    <cofactor evidence="1">
        <name>Zn(2+)</name>
        <dbReference type="ChEBI" id="CHEBI:29105"/>
    </cofactor>
    <text evidence="1">Binds 1 zinc ion per subunit.</text>
</comment>
<comment type="pathway">
    <text>Purine metabolism; 7-cyano-7-deazaguanine biosynthesis.</text>
</comment>
<comment type="miscellaneous">
    <text evidence="1">The active site is at the interface between 2 subunits. The proton acceptor Cys is on one subunit, and the charge relay system is on the other subunit (By similarity).</text>
</comment>
<comment type="similarity">
    <text evidence="2">Belongs to the PTPS family. QueD subfamily.</text>
</comment>
<evidence type="ECO:0000250" key="1"/>
<evidence type="ECO:0000305" key="2"/>
<keyword id="KW-0456">Lyase</keyword>
<keyword id="KW-0479">Metal-binding</keyword>
<keyword id="KW-0671">Queuosine biosynthesis</keyword>
<keyword id="KW-0862">Zinc</keyword>
<gene>
    <name type="primary">queD</name>
    <name type="ordered locus">jhp_0867</name>
</gene>
<feature type="chain" id="PRO_0000057927" description="6-carboxy-5,6,7,8-tetrahydropterin synthase">
    <location>
        <begin position="1"/>
        <end position="200"/>
    </location>
</feature>
<feature type="active site" description="Proton acceptor" evidence="1">
    <location>
        <position position="23"/>
    </location>
</feature>
<feature type="active site" description="Charge relay system" evidence="1">
    <location>
        <position position="68"/>
    </location>
</feature>
<feature type="active site" description="Charge relay system" evidence="1">
    <location>
        <position position="136"/>
    </location>
</feature>
<feature type="binding site" evidence="1">
    <location>
        <position position="13"/>
    </location>
    <ligand>
        <name>Zn(2+)</name>
        <dbReference type="ChEBI" id="CHEBI:29105"/>
    </ligand>
</feature>
<feature type="binding site" evidence="1">
    <location>
        <position position="28"/>
    </location>
    <ligand>
        <name>Zn(2+)</name>
        <dbReference type="ChEBI" id="CHEBI:29105"/>
    </ligand>
</feature>
<feature type="binding site" evidence="1">
    <location>
        <position position="30"/>
    </location>
    <ligand>
        <name>Zn(2+)</name>
        <dbReference type="ChEBI" id="CHEBI:29105"/>
    </ligand>
</feature>
<accession>Q9ZKR8</accession>
<proteinExistence type="inferred from homology"/>
<reference key="1">
    <citation type="journal article" date="1999" name="Nature">
        <title>Genomic sequence comparison of two unrelated isolates of the human gastric pathogen Helicobacter pylori.</title>
        <authorList>
            <person name="Alm R.A."/>
            <person name="Ling L.-S.L."/>
            <person name="Moir D.T."/>
            <person name="King B.L."/>
            <person name="Brown E.D."/>
            <person name="Doig P.C."/>
            <person name="Smith D.R."/>
            <person name="Noonan B."/>
            <person name="Guild B.C."/>
            <person name="deJonge B.L."/>
            <person name="Carmel G."/>
            <person name="Tummino P.J."/>
            <person name="Caruso A."/>
            <person name="Uria-Nickelsen M."/>
            <person name="Mills D.M."/>
            <person name="Ives C."/>
            <person name="Gibson R."/>
            <person name="Merberg D."/>
            <person name="Mills S.D."/>
            <person name="Jiang Q."/>
            <person name="Taylor D.E."/>
            <person name="Vovis G.F."/>
            <person name="Trust T.J."/>
        </authorList>
    </citation>
    <scope>NUCLEOTIDE SEQUENCE [LARGE SCALE GENOMIC DNA]</scope>
    <source>
        <strain>J99 / ATCC 700824</strain>
    </source>
</reference>
<dbReference type="EC" id="4.1.2.50"/>
<dbReference type="EMBL" id="AE001439">
    <property type="protein sequence ID" value="AAD06439.1"/>
    <property type="molecule type" value="Genomic_DNA"/>
</dbReference>
<dbReference type="PIR" id="B71879">
    <property type="entry name" value="B71879"/>
</dbReference>
<dbReference type="RefSeq" id="WP_000236788.1">
    <property type="nucleotide sequence ID" value="NC_000921.1"/>
</dbReference>
<dbReference type="SMR" id="Q9ZKR8"/>
<dbReference type="KEGG" id="hpj:jhp_0867"/>
<dbReference type="PATRIC" id="fig|85963.30.peg.96"/>
<dbReference type="eggNOG" id="COG0720">
    <property type="taxonomic scope" value="Bacteria"/>
</dbReference>
<dbReference type="UniPathway" id="UPA00391"/>
<dbReference type="Proteomes" id="UP000000804">
    <property type="component" value="Chromosome"/>
</dbReference>
<dbReference type="GO" id="GO:0070497">
    <property type="term" value="F:6-carboxytetrahydropterin synthase activity"/>
    <property type="evidence" value="ECO:0007669"/>
    <property type="project" value="UniProtKB-EC"/>
</dbReference>
<dbReference type="GO" id="GO:0046872">
    <property type="term" value="F:metal ion binding"/>
    <property type="evidence" value="ECO:0007669"/>
    <property type="project" value="UniProtKB-KW"/>
</dbReference>
<dbReference type="GO" id="GO:0008616">
    <property type="term" value="P:queuosine biosynthetic process"/>
    <property type="evidence" value="ECO:0007669"/>
    <property type="project" value="UniProtKB-KW"/>
</dbReference>
<dbReference type="Gene3D" id="3.30.479.10">
    <property type="entry name" value="6-pyruvoyl tetrahydropterin synthase/QueD"/>
    <property type="match status" value="1"/>
</dbReference>
<dbReference type="InterPro" id="IPR007115">
    <property type="entry name" value="6-PTP_synth/QueD"/>
</dbReference>
<dbReference type="InterPro" id="IPR038418">
    <property type="entry name" value="6-PTP_synth/QueD_sf"/>
</dbReference>
<dbReference type="PANTHER" id="PTHR12589:SF7">
    <property type="entry name" value="6-PYRUVOYL TETRAHYDROBIOPTERIN SYNTHASE"/>
    <property type="match status" value="1"/>
</dbReference>
<dbReference type="PANTHER" id="PTHR12589">
    <property type="entry name" value="PYRUVOYL TETRAHYDROBIOPTERIN SYNTHASE"/>
    <property type="match status" value="1"/>
</dbReference>
<dbReference type="Pfam" id="PF01242">
    <property type="entry name" value="PTPS"/>
    <property type="match status" value="1"/>
</dbReference>
<dbReference type="SUPFAM" id="SSF55620">
    <property type="entry name" value="Tetrahydrobiopterin biosynthesis enzymes-like"/>
    <property type="match status" value="1"/>
</dbReference>
<organism>
    <name type="scientific">Helicobacter pylori (strain J99 / ATCC 700824)</name>
    <name type="common">Campylobacter pylori J99</name>
    <dbReference type="NCBI Taxonomy" id="85963"/>
    <lineage>
        <taxon>Bacteria</taxon>
        <taxon>Pseudomonadati</taxon>
        <taxon>Campylobacterota</taxon>
        <taxon>Epsilonproteobacteria</taxon>
        <taxon>Campylobacterales</taxon>
        <taxon>Helicobacteraceae</taxon>
        <taxon>Helicobacter</taxon>
    </lineage>
</organism>
<sequence>MVIRRLYKFCASHVVRNCSSLKCAQNIHGHNYEVEVFIETNRLDNANMALDFGLMQQEMQTFIDSFDHAHHFWDKESPEFQRFIENHCVRYVKCSFNLSAESYALMFLYYLTKILQKSVFSNNEGELKVSSVRVHETKNGYAESFLKDLENPHFKSLVHDHCVSFSQGIQSLWHDKDFFHKIISDEKQCFFHAKPLHQIP</sequence>
<name>QUED_HELPJ</name>
<protein>
    <recommendedName>
        <fullName>6-carboxy-5,6,7,8-tetrahydropterin synthase</fullName>
        <shortName>CPH4 synthase</shortName>
        <ecNumber>4.1.2.50</ecNumber>
    </recommendedName>
    <alternativeName>
        <fullName>Queuosine biosynthesis protein QueD</fullName>
    </alternativeName>
</protein>